<gene>
    <name evidence="1" type="primary">mutS</name>
    <name type="ordered locus">Ldb1616</name>
</gene>
<reference key="1">
    <citation type="journal article" date="2006" name="Proc. Natl. Acad. Sci. U.S.A.">
        <title>The complete genome sequence of Lactobacillus bulgaricus reveals extensive and ongoing reductive evolution.</title>
        <authorList>
            <person name="van de Guchte M."/>
            <person name="Penaud S."/>
            <person name="Grimaldi C."/>
            <person name="Barbe V."/>
            <person name="Bryson K."/>
            <person name="Nicolas P."/>
            <person name="Robert C."/>
            <person name="Oztas S."/>
            <person name="Mangenot S."/>
            <person name="Couloux A."/>
            <person name="Loux V."/>
            <person name="Dervyn R."/>
            <person name="Bossy R."/>
            <person name="Bolotin A."/>
            <person name="Batto J.-M."/>
            <person name="Walunas T."/>
            <person name="Gibrat J.-F."/>
            <person name="Bessieres P."/>
            <person name="Weissenbach J."/>
            <person name="Ehrlich S.D."/>
            <person name="Maguin E."/>
        </authorList>
    </citation>
    <scope>NUCLEOTIDE SEQUENCE [LARGE SCALE GENOMIC DNA]</scope>
    <source>
        <strain>ATCC 11842 / DSM 20081 / BCRC 10696 / JCM 1002 / NBRC 13953 / NCIMB 11778 / NCTC 12712 / WDCM 00102 / Lb 14</strain>
    </source>
</reference>
<keyword id="KW-0067">ATP-binding</keyword>
<keyword id="KW-0227">DNA damage</keyword>
<keyword id="KW-0234">DNA repair</keyword>
<keyword id="KW-0238">DNA-binding</keyword>
<keyword id="KW-0547">Nucleotide-binding</keyword>
<keyword id="KW-1185">Reference proteome</keyword>
<dbReference type="EMBL" id="CR954253">
    <property type="protein sequence ID" value="CAI98405.1"/>
    <property type="molecule type" value="Genomic_DNA"/>
</dbReference>
<dbReference type="RefSeq" id="WP_011544117.1">
    <property type="nucleotide sequence ID" value="NC_008054.1"/>
</dbReference>
<dbReference type="SMR" id="Q1G938"/>
<dbReference type="STRING" id="390333.Ldb1616"/>
<dbReference type="KEGG" id="ldb:Ldb1616"/>
<dbReference type="PATRIC" id="fig|390333.13.peg.1008"/>
<dbReference type="eggNOG" id="COG0249">
    <property type="taxonomic scope" value="Bacteria"/>
</dbReference>
<dbReference type="HOGENOM" id="CLU_002472_1_3_9"/>
<dbReference type="BioCyc" id="LDEL390333:LDB_RS06985-MONOMER"/>
<dbReference type="Proteomes" id="UP000001259">
    <property type="component" value="Chromosome"/>
</dbReference>
<dbReference type="GO" id="GO:0005829">
    <property type="term" value="C:cytosol"/>
    <property type="evidence" value="ECO:0007669"/>
    <property type="project" value="TreeGrafter"/>
</dbReference>
<dbReference type="GO" id="GO:0005524">
    <property type="term" value="F:ATP binding"/>
    <property type="evidence" value="ECO:0007669"/>
    <property type="project" value="UniProtKB-UniRule"/>
</dbReference>
<dbReference type="GO" id="GO:0140664">
    <property type="term" value="F:ATP-dependent DNA damage sensor activity"/>
    <property type="evidence" value="ECO:0007669"/>
    <property type="project" value="InterPro"/>
</dbReference>
<dbReference type="GO" id="GO:0003684">
    <property type="term" value="F:damaged DNA binding"/>
    <property type="evidence" value="ECO:0007669"/>
    <property type="project" value="UniProtKB-UniRule"/>
</dbReference>
<dbReference type="GO" id="GO:0030983">
    <property type="term" value="F:mismatched DNA binding"/>
    <property type="evidence" value="ECO:0007669"/>
    <property type="project" value="InterPro"/>
</dbReference>
<dbReference type="GO" id="GO:0006298">
    <property type="term" value="P:mismatch repair"/>
    <property type="evidence" value="ECO:0007669"/>
    <property type="project" value="UniProtKB-UniRule"/>
</dbReference>
<dbReference type="CDD" id="cd03284">
    <property type="entry name" value="ABC_MutS1"/>
    <property type="match status" value="1"/>
</dbReference>
<dbReference type="FunFam" id="1.10.1420.10:FF:000001">
    <property type="entry name" value="DNA mismatch repair protein MutS"/>
    <property type="match status" value="1"/>
</dbReference>
<dbReference type="FunFam" id="3.40.1170.10:FF:000001">
    <property type="entry name" value="DNA mismatch repair protein MutS"/>
    <property type="match status" value="1"/>
</dbReference>
<dbReference type="FunFam" id="3.40.50.300:FF:000870">
    <property type="entry name" value="MutS protein homolog 4"/>
    <property type="match status" value="1"/>
</dbReference>
<dbReference type="Gene3D" id="1.10.1420.10">
    <property type="match status" value="2"/>
</dbReference>
<dbReference type="Gene3D" id="3.40.1170.10">
    <property type="entry name" value="DNA repair protein MutS, domain I"/>
    <property type="match status" value="1"/>
</dbReference>
<dbReference type="Gene3D" id="3.30.420.110">
    <property type="entry name" value="MutS, connector domain"/>
    <property type="match status" value="1"/>
</dbReference>
<dbReference type="Gene3D" id="3.40.50.300">
    <property type="entry name" value="P-loop containing nucleotide triphosphate hydrolases"/>
    <property type="match status" value="1"/>
</dbReference>
<dbReference type="HAMAP" id="MF_00096">
    <property type="entry name" value="MutS"/>
    <property type="match status" value="1"/>
</dbReference>
<dbReference type="InterPro" id="IPR005748">
    <property type="entry name" value="DNA_mismatch_repair_MutS"/>
</dbReference>
<dbReference type="InterPro" id="IPR007695">
    <property type="entry name" value="DNA_mismatch_repair_MutS-lik_N"/>
</dbReference>
<dbReference type="InterPro" id="IPR017261">
    <property type="entry name" value="DNA_mismatch_repair_MutS/MSH"/>
</dbReference>
<dbReference type="InterPro" id="IPR000432">
    <property type="entry name" value="DNA_mismatch_repair_MutS_C"/>
</dbReference>
<dbReference type="InterPro" id="IPR007861">
    <property type="entry name" value="DNA_mismatch_repair_MutS_clamp"/>
</dbReference>
<dbReference type="InterPro" id="IPR007696">
    <property type="entry name" value="DNA_mismatch_repair_MutS_core"/>
</dbReference>
<dbReference type="InterPro" id="IPR016151">
    <property type="entry name" value="DNA_mismatch_repair_MutS_N"/>
</dbReference>
<dbReference type="InterPro" id="IPR036187">
    <property type="entry name" value="DNA_mismatch_repair_MutS_sf"/>
</dbReference>
<dbReference type="InterPro" id="IPR007860">
    <property type="entry name" value="DNA_mmatch_repair_MutS_con_dom"/>
</dbReference>
<dbReference type="InterPro" id="IPR045076">
    <property type="entry name" value="MutS"/>
</dbReference>
<dbReference type="InterPro" id="IPR036678">
    <property type="entry name" value="MutS_con_dom_sf"/>
</dbReference>
<dbReference type="InterPro" id="IPR027417">
    <property type="entry name" value="P-loop_NTPase"/>
</dbReference>
<dbReference type="NCBIfam" id="TIGR01070">
    <property type="entry name" value="mutS1"/>
    <property type="match status" value="1"/>
</dbReference>
<dbReference type="NCBIfam" id="NF003810">
    <property type="entry name" value="PRK05399.1"/>
    <property type="match status" value="1"/>
</dbReference>
<dbReference type="PANTHER" id="PTHR11361:SF34">
    <property type="entry name" value="DNA MISMATCH REPAIR PROTEIN MSH1, MITOCHONDRIAL"/>
    <property type="match status" value="1"/>
</dbReference>
<dbReference type="PANTHER" id="PTHR11361">
    <property type="entry name" value="DNA MISMATCH REPAIR PROTEIN MUTS FAMILY MEMBER"/>
    <property type="match status" value="1"/>
</dbReference>
<dbReference type="Pfam" id="PF01624">
    <property type="entry name" value="MutS_I"/>
    <property type="match status" value="1"/>
</dbReference>
<dbReference type="Pfam" id="PF05188">
    <property type="entry name" value="MutS_II"/>
    <property type="match status" value="1"/>
</dbReference>
<dbReference type="Pfam" id="PF05192">
    <property type="entry name" value="MutS_III"/>
    <property type="match status" value="1"/>
</dbReference>
<dbReference type="Pfam" id="PF05190">
    <property type="entry name" value="MutS_IV"/>
    <property type="match status" value="1"/>
</dbReference>
<dbReference type="Pfam" id="PF00488">
    <property type="entry name" value="MutS_V"/>
    <property type="match status" value="1"/>
</dbReference>
<dbReference type="PIRSF" id="PIRSF037677">
    <property type="entry name" value="DNA_mis_repair_Msh6"/>
    <property type="match status" value="1"/>
</dbReference>
<dbReference type="SMART" id="SM00534">
    <property type="entry name" value="MUTSac"/>
    <property type="match status" value="1"/>
</dbReference>
<dbReference type="SMART" id="SM00533">
    <property type="entry name" value="MUTSd"/>
    <property type="match status" value="1"/>
</dbReference>
<dbReference type="SUPFAM" id="SSF55271">
    <property type="entry name" value="DNA repair protein MutS, domain I"/>
    <property type="match status" value="1"/>
</dbReference>
<dbReference type="SUPFAM" id="SSF53150">
    <property type="entry name" value="DNA repair protein MutS, domain II"/>
    <property type="match status" value="1"/>
</dbReference>
<dbReference type="SUPFAM" id="SSF48334">
    <property type="entry name" value="DNA repair protein MutS, domain III"/>
    <property type="match status" value="1"/>
</dbReference>
<dbReference type="SUPFAM" id="SSF52540">
    <property type="entry name" value="P-loop containing nucleoside triphosphate hydrolases"/>
    <property type="match status" value="1"/>
</dbReference>
<dbReference type="PROSITE" id="PS00486">
    <property type="entry name" value="DNA_MISMATCH_REPAIR_2"/>
    <property type="match status" value="1"/>
</dbReference>
<comment type="function">
    <text evidence="1">This protein is involved in the repair of mismatches in DNA. It is possible that it carries out the mismatch recognition step. This protein has a weak ATPase activity.</text>
</comment>
<comment type="similarity">
    <text evidence="1">Belongs to the DNA mismatch repair MutS family.</text>
</comment>
<name>MUTS_LACDA</name>
<organism>
    <name type="scientific">Lactobacillus delbrueckii subsp. bulgaricus (strain ATCC 11842 / DSM 20081 / BCRC 10696 / JCM 1002 / NBRC 13953 / NCIMB 11778 / NCTC 12712 / WDCM 00102 / Lb 14)</name>
    <dbReference type="NCBI Taxonomy" id="390333"/>
    <lineage>
        <taxon>Bacteria</taxon>
        <taxon>Bacillati</taxon>
        <taxon>Bacillota</taxon>
        <taxon>Bacilli</taxon>
        <taxon>Lactobacillales</taxon>
        <taxon>Lactobacillaceae</taxon>
        <taxon>Lactobacillus</taxon>
    </lineage>
</organism>
<accession>Q1G938</accession>
<sequence length="856" mass="95653">MPRKATTPMMEQYYQIKDQYPDAFLFYRVGDFYELYEDDAIKGSQILELTLTHRSNKSENPIPMAGVPHMAVDSYVNTLVEKGYKVAICEQLEDPKKAKGMVKRGIIQLVTPGTKMAQGPDDSQESNYLTSVVEKAGGYGLAYSDLSTGEIFVTHVKHYAEVVNELLSLRTREVVFAGNLSASDRDRLQKANITVSEPAELEGEHAEISYVQQKLTDSMEKAAVRQLVVYLLATQKRSLAHLQVAESFEIGQYLQMANTVQRNLELTQSATTGRKQGSLFWVLDKTTTAMGGRLLKQWLSRPLLSLDRIKQRQQMVQALLDDYFTRENIVDSLKGVYDLERLSGRVAFGNVNPRELLQLAKSLEATKLIIQTLVESGNPDLEKYGQGIDPQSELAESITNCLVDQPPISAKDGGIIRAGVSEDLDKYREAMNGGKKWLAQMEMEERQRTGIDNLKIGYNRVFGYFIQVSKGNVAKVPQDRYTRKQTLTNADRYITPELKEHENLILEAESRSTDLEYELFSQLREAVKAHIPDLQELGRQLAALDVFVAFAQDAEEKNYCRPSFSSKNEIAVKNGRHPVVGAVLPAGSYIPNDLVMDEDTSIYLITGPNMSGKSTYMRQLALIAIMAQIGSFVPADSAKLPVFDQVFTRIGAADDLYSGKSTFMVEMSEANEALQHASSRSLVLFDEIGRGTATYDGMALAGAIIKYLHDKVGAKTLFATHYHELTELDETLLHLKNIHVGATEENGKLIFLHKILPGPADQSYGIHVAKLAGLPRVVLREASSMLKRLEAEGAREINPSRQQLDLFSPVEVVEENPLKAEQEELLDEISQVNLNEKTPLEVMQLVADWQQALKEE</sequence>
<protein>
    <recommendedName>
        <fullName evidence="1">DNA mismatch repair protein MutS</fullName>
    </recommendedName>
</protein>
<evidence type="ECO:0000255" key="1">
    <source>
        <dbReference type="HAMAP-Rule" id="MF_00096"/>
    </source>
</evidence>
<proteinExistence type="inferred from homology"/>
<feature type="chain" id="PRO_1000057635" description="DNA mismatch repair protein MutS">
    <location>
        <begin position="1"/>
        <end position="856"/>
    </location>
</feature>
<feature type="binding site" evidence="1">
    <location>
        <begin position="607"/>
        <end position="614"/>
    </location>
    <ligand>
        <name>ATP</name>
        <dbReference type="ChEBI" id="CHEBI:30616"/>
    </ligand>
</feature>